<reference key="1">
    <citation type="submission" date="2007-06" db="EMBL/GenBank/DDBJ databases">
        <title>Complete sequence of Clostridium beijerinckii NCIMB 8052.</title>
        <authorList>
            <consortium name="US DOE Joint Genome Institute"/>
            <person name="Copeland A."/>
            <person name="Lucas S."/>
            <person name="Lapidus A."/>
            <person name="Barry K."/>
            <person name="Detter J.C."/>
            <person name="Glavina del Rio T."/>
            <person name="Hammon N."/>
            <person name="Israni S."/>
            <person name="Dalin E."/>
            <person name="Tice H."/>
            <person name="Pitluck S."/>
            <person name="Sims D."/>
            <person name="Brettin T."/>
            <person name="Bruce D."/>
            <person name="Tapia R."/>
            <person name="Brainard J."/>
            <person name="Schmutz J."/>
            <person name="Larimer F."/>
            <person name="Land M."/>
            <person name="Hauser L."/>
            <person name="Kyrpides N."/>
            <person name="Mikhailova N."/>
            <person name="Bennet G."/>
            <person name="Cann I."/>
            <person name="Chen J.-S."/>
            <person name="Contreras A.L."/>
            <person name="Jones D."/>
            <person name="Kashket E."/>
            <person name="Mitchell W."/>
            <person name="Stoddard S."/>
            <person name="Schwarz W."/>
            <person name="Qureshi N."/>
            <person name="Young M."/>
            <person name="Shi Z."/>
            <person name="Ezeji T."/>
            <person name="White B."/>
            <person name="Blaschek H."/>
            <person name="Richardson P."/>
        </authorList>
    </citation>
    <scope>NUCLEOTIDE SEQUENCE [LARGE SCALE GENOMIC DNA]</scope>
    <source>
        <strain>ATCC 51743 / NCIMB 8052</strain>
    </source>
</reference>
<gene>
    <name evidence="1" type="primary">rplI</name>
    <name type="ordered locus">Cbei_5081</name>
</gene>
<organism>
    <name type="scientific">Clostridium beijerinckii (strain ATCC 51743 / NCIMB 8052)</name>
    <name type="common">Clostridium acetobutylicum</name>
    <dbReference type="NCBI Taxonomy" id="290402"/>
    <lineage>
        <taxon>Bacteria</taxon>
        <taxon>Bacillati</taxon>
        <taxon>Bacillota</taxon>
        <taxon>Clostridia</taxon>
        <taxon>Eubacteriales</taxon>
        <taxon>Clostridiaceae</taxon>
        <taxon>Clostridium</taxon>
    </lineage>
</organism>
<protein>
    <recommendedName>
        <fullName evidence="1">Large ribosomal subunit protein bL9</fullName>
    </recommendedName>
    <alternativeName>
        <fullName evidence="2">50S ribosomal protein L9</fullName>
    </alternativeName>
</protein>
<proteinExistence type="inferred from homology"/>
<dbReference type="EMBL" id="CP000721">
    <property type="protein sequence ID" value="ABR37187.1"/>
    <property type="molecule type" value="Genomic_DNA"/>
</dbReference>
<dbReference type="RefSeq" id="WP_012061230.1">
    <property type="nucleotide sequence ID" value="NC_009617.1"/>
</dbReference>
<dbReference type="SMR" id="A6M3K7"/>
<dbReference type="KEGG" id="cbe:Cbei_5081"/>
<dbReference type="eggNOG" id="COG0359">
    <property type="taxonomic scope" value="Bacteria"/>
</dbReference>
<dbReference type="HOGENOM" id="CLU_078938_3_0_9"/>
<dbReference type="Proteomes" id="UP000000565">
    <property type="component" value="Chromosome"/>
</dbReference>
<dbReference type="GO" id="GO:1990904">
    <property type="term" value="C:ribonucleoprotein complex"/>
    <property type="evidence" value="ECO:0007669"/>
    <property type="project" value="UniProtKB-KW"/>
</dbReference>
<dbReference type="GO" id="GO:0005840">
    <property type="term" value="C:ribosome"/>
    <property type="evidence" value="ECO:0007669"/>
    <property type="project" value="UniProtKB-KW"/>
</dbReference>
<dbReference type="GO" id="GO:0019843">
    <property type="term" value="F:rRNA binding"/>
    <property type="evidence" value="ECO:0007669"/>
    <property type="project" value="UniProtKB-UniRule"/>
</dbReference>
<dbReference type="GO" id="GO:0003735">
    <property type="term" value="F:structural constituent of ribosome"/>
    <property type="evidence" value="ECO:0007669"/>
    <property type="project" value="InterPro"/>
</dbReference>
<dbReference type="GO" id="GO:0006412">
    <property type="term" value="P:translation"/>
    <property type="evidence" value="ECO:0007669"/>
    <property type="project" value="UniProtKB-UniRule"/>
</dbReference>
<dbReference type="FunFam" id="3.40.5.10:FF:000002">
    <property type="entry name" value="50S ribosomal protein L9"/>
    <property type="match status" value="1"/>
</dbReference>
<dbReference type="Gene3D" id="3.10.430.100">
    <property type="entry name" value="Ribosomal protein L9, C-terminal domain"/>
    <property type="match status" value="1"/>
</dbReference>
<dbReference type="Gene3D" id="3.40.5.10">
    <property type="entry name" value="Ribosomal protein L9, N-terminal domain"/>
    <property type="match status" value="1"/>
</dbReference>
<dbReference type="HAMAP" id="MF_00503">
    <property type="entry name" value="Ribosomal_bL9"/>
    <property type="match status" value="1"/>
</dbReference>
<dbReference type="InterPro" id="IPR000244">
    <property type="entry name" value="Ribosomal_bL9"/>
</dbReference>
<dbReference type="InterPro" id="IPR009027">
    <property type="entry name" value="Ribosomal_bL9/RNase_H1_N"/>
</dbReference>
<dbReference type="InterPro" id="IPR020594">
    <property type="entry name" value="Ribosomal_bL9_bac/chp"/>
</dbReference>
<dbReference type="InterPro" id="IPR020069">
    <property type="entry name" value="Ribosomal_bL9_C"/>
</dbReference>
<dbReference type="InterPro" id="IPR036791">
    <property type="entry name" value="Ribosomal_bL9_C_sf"/>
</dbReference>
<dbReference type="InterPro" id="IPR020070">
    <property type="entry name" value="Ribosomal_bL9_N"/>
</dbReference>
<dbReference type="InterPro" id="IPR036935">
    <property type="entry name" value="Ribosomal_bL9_N_sf"/>
</dbReference>
<dbReference type="NCBIfam" id="TIGR00158">
    <property type="entry name" value="L9"/>
    <property type="match status" value="1"/>
</dbReference>
<dbReference type="PANTHER" id="PTHR21368">
    <property type="entry name" value="50S RIBOSOMAL PROTEIN L9"/>
    <property type="match status" value="1"/>
</dbReference>
<dbReference type="Pfam" id="PF03948">
    <property type="entry name" value="Ribosomal_L9_C"/>
    <property type="match status" value="1"/>
</dbReference>
<dbReference type="Pfam" id="PF01281">
    <property type="entry name" value="Ribosomal_L9_N"/>
    <property type="match status" value="1"/>
</dbReference>
<dbReference type="SUPFAM" id="SSF55658">
    <property type="entry name" value="L9 N-domain-like"/>
    <property type="match status" value="1"/>
</dbReference>
<dbReference type="SUPFAM" id="SSF55653">
    <property type="entry name" value="Ribosomal protein L9 C-domain"/>
    <property type="match status" value="1"/>
</dbReference>
<dbReference type="PROSITE" id="PS00651">
    <property type="entry name" value="RIBOSOMAL_L9"/>
    <property type="match status" value="1"/>
</dbReference>
<sequence length="148" mass="16742">MKVILLQDVKKIGKKGDIIEASDGYARNFLFPRKLAQEASDANMHILNNKKENERKQKLAELEAAQKLAEELKGKEIKIKAKTGENGKLFGAITSKDVAELIREQYKIEIDKKKIVMDTIKLAGGYEIDIKLYPEVSTKMKVIIVPQE</sequence>
<comment type="function">
    <text evidence="1">Binds to the 23S rRNA.</text>
</comment>
<comment type="similarity">
    <text evidence="1">Belongs to the bacterial ribosomal protein bL9 family.</text>
</comment>
<name>RL9_CLOB8</name>
<accession>A6M3K7</accession>
<evidence type="ECO:0000255" key="1">
    <source>
        <dbReference type="HAMAP-Rule" id="MF_00503"/>
    </source>
</evidence>
<evidence type="ECO:0000305" key="2"/>
<feature type="chain" id="PRO_1000081471" description="Large ribosomal subunit protein bL9">
    <location>
        <begin position="1"/>
        <end position="148"/>
    </location>
</feature>
<keyword id="KW-0687">Ribonucleoprotein</keyword>
<keyword id="KW-0689">Ribosomal protein</keyword>
<keyword id="KW-0694">RNA-binding</keyword>
<keyword id="KW-0699">rRNA-binding</keyword>